<gene>
    <name evidence="1" type="primary">rpsH</name>
    <name type="ordered locus">YpAngola_A0597</name>
</gene>
<feature type="chain" id="PRO_1000140642" description="Small ribosomal subunit protein uS8">
    <location>
        <begin position="1"/>
        <end position="130"/>
    </location>
</feature>
<reference key="1">
    <citation type="journal article" date="2010" name="J. Bacteriol.">
        <title>Genome sequence of the deep-rooted Yersinia pestis strain Angola reveals new insights into the evolution and pangenome of the plague bacterium.</title>
        <authorList>
            <person name="Eppinger M."/>
            <person name="Worsham P.L."/>
            <person name="Nikolich M.P."/>
            <person name="Riley D.R."/>
            <person name="Sebastian Y."/>
            <person name="Mou S."/>
            <person name="Achtman M."/>
            <person name="Lindler L.E."/>
            <person name="Ravel J."/>
        </authorList>
    </citation>
    <scope>NUCLEOTIDE SEQUENCE [LARGE SCALE GENOMIC DNA]</scope>
    <source>
        <strain>Angola</strain>
    </source>
</reference>
<keyword id="KW-0687">Ribonucleoprotein</keyword>
<keyword id="KW-0689">Ribosomal protein</keyword>
<keyword id="KW-0694">RNA-binding</keyword>
<keyword id="KW-0699">rRNA-binding</keyword>
<dbReference type="EMBL" id="CP000901">
    <property type="protein sequence ID" value="ABX86386.1"/>
    <property type="molecule type" value="Genomic_DNA"/>
</dbReference>
<dbReference type="RefSeq" id="WP_002213332.1">
    <property type="nucleotide sequence ID" value="NZ_CP009935.1"/>
</dbReference>
<dbReference type="SMR" id="A9R909"/>
<dbReference type="GeneID" id="96663182"/>
<dbReference type="KEGG" id="ypg:YpAngola_A0597"/>
<dbReference type="PATRIC" id="fig|349746.12.peg.1547"/>
<dbReference type="GO" id="GO:1990904">
    <property type="term" value="C:ribonucleoprotein complex"/>
    <property type="evidence" value="ECO:0007669"/>
    <property type="project" value="UniProtKB-KW"/>
</dbReference>
<dbReference type="GO" id="GO:0005840">
    <property type="term" value="C:ribosome"/>
    <property type="evidence" value="ECO:0007669"/>
    <property type="project" value="UniProtKB-KW"/>
</dbReference>
<dbReference type="GO" id="GO:0019843">
    <property type="term" value="F:rRNA binding"/>
    <property type="evidence" value="ECO:0007669"/>
    <property type="project" value="UniProtKB-UniRule"/>
</dbReference>
<dbReference type="GO" id="GO:0003735">
    <property type="term" value="F:structural constituent of ribosome"/>
    <property type="evidence" value="ECO:0007669"/>
    <property type="project" value="InterPro"/>
</dbReference>
<dbReference type="GO" id="GO:0006412">
    <property type="term" value="P:translation"/>
    <property type="evidence" value="ECO:0007669"/>
    <property type="project" value="UniProtKB-UniRule"/>
</dbReference>
<dbReference type="FunFam" id="3.30.1370.30:FF:000003">
    <property type="entry name" value="30S ribosomal protein S8"/>
    <property type="match status" value="1"/>
</dbReference>
<dbReference type="FunFam" id="3.30.1490.10:FF:000001">
    <property type="entry name" value="30S ribosomal protein S8"/>
    <property type="match status" value="1"/>
</dbReference>
<dbReference type="Gene3D" id="3.30.1370.30">
    <property type="match status" value="1"/>
</dbReference>
<dbReference type="Gene3D" id="3.30.1490.10">
    <property type="match status" value="1"/>
</dbReference>
<dbReference type="HAMAP" id="MF_01302_B">
    <property type="entry name" value="Ribosomal_uS8_B"/>
    <property type="match status" value="1"/>
</dbReference>
<dbReference type="InterPro" id="IPR000630">
    <property type="entry name" value="Ribosomal_uS8"/>
</dbReference>
<dbReference type="InterPro" id="IPR047863">
    <property type="entry name" value="Ribosomal_uS8_CS"/>
</dbReference>
<dbReference type="InterPro" id="IPR035987">
    <property type="entry name" value="Ribosomal_uS8_sf"/>
</dbReference>
<dbReference type="NCBIfam" id="NF001109">
    <property type="entry name" value="PRK00136.1"/>
    <property type="match status" value="1"/>
</dbReference>
<dbReference type="PANTHER" id="PTHR11758">
    <property type="entry name" value="40S RIBOSOMAL PROTEIN S15A"/>
    <property type="match status" value="1"/>
</dbReference>
<dbReference type="Pfam" id="PF00410">
    <property type="entry name" value="Ribosomal_S8"/>
    <property type="match status" value="1"/>
</dbReference>
<dbReference type="SUPFAM" id="SSF56047">
    <property type="entry name" value="Ribosomal protein S8"/>
    <property type="match status" value="1"/>
</dbReference>
<dbReference type="PROSITE" id="PS00053">
    <property type="entry name" value="RIBOSOMAL_S8"/>
    <property type="match status" value="1"/>
</dbReference>
<protein>
    <recommendedName>
        <fullName evidence="1">Small ribosomal subunit protein uS8</fullName>
    </recommendedName>
    <alternativeName>
        <fullName evidence="2">30S ribosomal protein S8</fullName>
    </alternativeName>
</protein>
<evidence type="ECO:0000255" key="1">
    <source>
        <dbReference type="HAMAP-Rule" id="MF_01302"/>
    </source>
</evidence>
<evidence type="ECO:0000305" key="2"/>
<comment type="function">
    <text evidence="1">One of the primary rRNA binding proteins, it binds directly to 16S rRNA central domain where it helps coordinate assembly of the platform of the 30S subunit.</text>
</comment>
<comment type="subunit">
    <text evidence="1">Part of the 30S ribosomal subunit. Contacts proteins S5 and S12.</text>
</comment>
<comment type="similarity">
    <text evidence="1">Belongs to the universal ribosomal protein uS8 family.</text>
</comment>
<proteinExistence type="inferred from homology"/>
<name>RS8_YERPG</name>
<accession>A9R909</accession>
<sequence length="130" mass="14109">MSMQDPIADMLTRIRNGQAANKVAVTMPSSKLKVAIANVLKEEGFIEDFKIEGDTKPVLELALKYFQGKAVVESIQRISRPGLRIYKKKDELPKVMAGLGIAVISTSKGVMTDRAARQAGLGGEIICYVA</sequence>
<organism>
    <name type="scientific">Yersinia pestis bv. Antiqua (strain Angola)</name>
    <dbReference type="NCBI Taxonomy" id="349746"/>
    <lineage>
        <taxon>Bacteria</taxon>
        <taxon>Pseudomonadati</taxon>
        <taxon>Pseudomonadota</taxon>
        <taxon>Gammaproteobacteria</taxon>
        <taxon>Enterobacterales</taxon>
        <taxon>Yersiniaceae</taxon>
        <taxon>Yersinia</taxon>
    </lineage>
</organism>